<feature type="chain" id="PRO_0000243652" description="Large ribosomal subunit protein bL20">
    <location>
        <begin position="1"/>
        <end position="128"/>
    </location>
</feature>
<sequence length="128" mass="14623">MARVKRGVTARARHKKVVALAKGYRGRSKNCYRAALQRLEKALVYAYRDRRNRKRDFRRLWIVRINAAARQWGIKYSQLMKGMALCGIELNRKMLAEMAVNDKAAFEKVVSAVAGTCGYACAVNQQDK</sequence>
<reference key="1">
    <citation type="journal article" date="2005" name="Proc. Natl. Acad. Sci. U.S.A.">
        <title>Complete genome sequencing of Anaplasma marginale reveals that the surface is skewed to two superfamilies of outer membrane proteins.</title>
        <authorList>
            <person name="Brayton K.A."/>
            <person name="Kappmeyer L.S."/>
            <person name="Herndon D.R."/>
            <person name="Dark M.J."/>
            <person name="Tibbals D.L."/>
            <person name="Palmer G.H."/>
            <person name="McGuire T.C."/>
            <person name="Knowles D.P. Jr."/>
        </authorList>
    </citation>
    <scope>NUCLEOTIDE SEQUENCE [LARGE SCALE GENOMIC DNA]</scope>
    <source>
        <strain>St. Maries</strain>
    </source>
</reference>
<accession>Q5PBV3</accession>
<name>RL20_ANAMM</name>
<keyword id="KW-0687">Ribonucleoprotein</keyword>
<keyword id="KW-0689">Ribosomal protein</keyword>
<keyword id="KW-0694">RNA-binding</keyword>
<keyword id="KW-0699">rRNA-binding</keyword>
<comment type="function">
    <text evidence="1">Binds directly to 23S ribosomal RNA and is necessary for the in vitro assembly process of the 50S ribosomal subunit. It is not involved in the protein synthesizing functions of that subunit.</text>
</comment>
<comment type="similarity">
    <text evidence="1">Belongs to the bacterial ribosomal protein bL20 family.</text>
</comment>
<protein>
    <recommendedName>
        <fullName evidence="1">Large ribosomal subunit protein bL20</fullName>
    </recommendedName>
    <alternativeName>
        <fullName evidence="2">50S ribosomal protein L20</fullName>
    </alternativeName>
</protein>
<gene>
    <name evidence="1" type="primary">rplT</name>
    <name type="ordered locus">AM054</name>
</gene>
<proteinExistence type="inferred from homology"/>
<organism>
    <name type="scientific">Anaplasma marginale (strain St. Maries)</name>
    <dbReference type="NCBI Taxonomy" id="234826"/>
    <lineage>
        <taxon>Bacteria</taxon>
        <taxon>Pseudomonadati</taxon>
        <taxon>Pseudomonadota</taxon>
        <taxon>Alphaproteobacteria</taxon>
        <taxon>Rickettsiales</taxon>
        <taxon>Anaplasmataceae</taxon>
        <taxon>Anaplasma</taxon>
    </lineage>
</organism>
<dbReference type="EMBL" id="CP000030">
    <property type="protein sequence ID" value="AAV86226.1"/>
    <property type="molecule type" value="Genomic_DNA"/>
</dbReference>
<dbReference type="RefSeq" id="WP_010262430.1">
    <property type="nucleotide sequence ID" value="NZ_AFMU01000001.1"/>
</dbReference>
<dbReference type="SMR" id="Q5PBV3"/>
<dbReference type="GeneID" id="7398762"/>
<dbReference type="KEGG" id="ama:AM054"/>
<dbReference type="HOGENOM" id="CLU_123265_0_1_5"/>
<dbReference type="GO" id="GO:1990904">
    <property type="term" value="C:ribonucleoprotein complex"/>
    <property type="evidence" value="ECO:0007669"/>
    <property type="project" value="UniProtKB-KW"/>
</dbReference>
<dbReference type="GO" id="GO:0005840">
    <property type="term" value="C:ribosome"/>
    <property type="evidence" value="ECO:0007669"/>
    <property type="project" value="UniProtKB-KW"/>
</dbReference>
<dbReference type="GO" id="GO:0019843">
    <property type="term" value="F:rRNA binding"/>
    <property type="evidence" value="ECO:0007669"/>
    <property type="project" value="UniProtKB-UniRule"/>
</dbReference>
<dbReference type="GO" id="GO:0003735">
    <property type="term" value="F:structural constituent of ribosome"/>
    <property type="evidence" value="ECO:0007669"/>
    <property type="project" value="InterPro"/>
</dbReference>
<dbReference type="GO" id="GO:0000027">
    <property type="term" value="P:ribosomal large subunit assembly"/>
    <property type="evidence" value="ECO:0007669"/>
    <property type="project" value="UniProtKB-UniRule"/>
</dbReference>
<dbReference type="GO" id="GO:0006412">
    <property type="term" value="P:translation"/>
    <property type="evidence" value="ECO:0007669"/>
    <property type="project" value="InterPro"/>
</dbReference>
<dbReference type="CDD" id="cd07026">
    <property type="entry name" value="Ribosomal_L20"/>
    <property type="match status" value="1"/>
</dbReference>
<dbReference type="FunFam" id="1.10.1900.20:FF:000001">
    <property type="entry name" value="50S ribosomal protein L20"/>
    <property type="match status" value="1"/>
</dbReference>
<dbReference type="Gene3D" id="6.10.160.10">
    <property type="match status" value="1"/>
</dbReference>
<dbReference type="Gene3D" id="1.10.1900.20">
    <property type="entry name" value="Ribosomal protein L20"/>
    <property type="match status" value="1"/>
</dbReference>
<dbReference type="HAMAP" id="MF_00382">
    <property type="entry name" value="Ribosomal_bL20"/>
    <property type="match status" value="1"/>
</dbReference>
<dbReference type="InterPro" id="IPR005813">
    <property type="entry name" value="Ribosomal_bL20"/>
</dbReference>
<dbReference type="InterPro" id="IPR049946">
    <property type="entry name" value="RIBOSOMAL_L20_CS"/>
</dbReference>
<dbReference type="InterPro" id="IPR035566">
    <property type="entry name" value="Ribosomal_protein_bL20_C"/>
</dbReference>
<dbReference type="NCBIfam" id="TIGR01032">
    <property type="entry name" value="rplT_bact"/>
    <property type="match status" value="1"/>
</dbReference>
<dbReference type="PANTHER" id="PTHR10986">
    <property type="entry name" value="39S RIBOSOMAL PROTEIN L20"/>
    <property type="match status" value="1"/>
</dbReference>
<dbReference type="Pfam" id="PF00453">
    <property type="entry name" value="Ribosomal_L20"/>
    <property type="match status" value="1"/>
</dbReference>
<dbReference type="PRINTS" id="PR00062">
    <property type="entry name" value="RIBOSOMALL20"/>
</dbReference>
<dbReference type="SUPFAM" id="SSF74731">
    <property type="entry name" value="Ribosomal protein L20"/>
    <property type="match status" value="1"/>
</dbReference>
<dbReference type="PROSITE" id="PS00937">
    <property type="entry name" value="RIBOSOMAL_L20"/>
    <property type="match status" value="1"/>
</dbReference>
<evidence type="ECO:0000255" key="1">
    <source>
        <dbReference type="HAMAP-Rule" id="MF_00382"/>
    </source>
</evidence>
<evidence type="ECO:0000305" key="2"/>